<organism>
    <name type="scientific">Xanthomonas oryzae pv. oryzae (strain MAFF 311018)</name>
    <dbReference type="NCBI Taxonomy" id="342109"/>
    <lineage>
        <taxon>Bacteria</taxon>
        <taxon>Pseudomonadati</taxon>
        <taxon>Pseudomonadota</taxon>
        <taxon>Gammaproteobacteria</taxon>
        <taxon>Lysobacterales</taxon>
        <taxon>Lysobacteraceae</taxon>
        <taxon>Xanthomonas</taxon>
    </lineage>
</organism>
<comment type="function">
    <text evidence="1">Involved in the heme biosynthesis. Catalyzes the aerobic oxidative decarboxylation of propionate groups of rings A and B of coproporphyrinogen-III to yield the vinyl groups in protoporphyrinogen-IX.</text>
</comment>
<comment type="catalytic activity">
    <reaction evidence="1">
        <text>coproporphyrinogen III + O2 + 2 H(+) = protoporphyrinogen IX + 2 CO2 + 2 H2O</text>
        <dbReference type="Rhea" id="RHEA:18257"/>
        <dbReference type="ChEBI" id="CHEBI:15377"/>
        <dbReference type="ChEBI" id="CHEBI:15378"/>
        <dbReference type="ChEBI" id="CHEBI:15379"/>
        <dbReference type="ChEBI" id="CHEBI:16526"/>
        <dbReference type="ChEBI" id="CHEBI:57307"/>
        <dbReference type="ChEBI" id="CHEBI:57309"/>
        <dbReference type="EC" id="1.3.3.3"/>
    </reaction>
</comment>
<comment type="cofactor">
    <cofactor evidence="1">
        <name>a divalent metal cation</name>
        <dbReference type="ChEBI" id="CHEBI:60240"/>
    </cofactor>
</comment>
<comment type="pathway">
    <text evidence="1">Porphyrin-containing compound metabolism; protoporphyrin-IX biosynthesis; protoporphyrinogen-IX from coproporphyrinogen-III (O2 route): step 1/1.</text>
</comment>
<comment type="subunit">
    <text evidence="1">Homodimer.</text>
</comment>
<comment type="subcellular location">
    <subcellularLocation>
        <location evidence="1">Cytoplasm</location>
    </subcellularLocation>
</comment>
<comment type="similarity">
    <text evidence="1">Belongs to the aerobic coproporphyrinogen-III oxidase family.</text>
</comment>
<gene>
    <name evidence="1" type="primary">hemF</name>
    <name type="ordered locus">XOO4002</name>
</gene>
<accession>Q2NY70</accession>
<feature type="chain" id="PRO_1000019514" description="Oxygen-dependent coproporphyrinogen-III oxidase">
    <location>
        <begin position="1"/>
        <end position="299"/>
    </location>
</feature>
<feature type="region of interest" description="Important for dimerization" evidence="1">
    <location>
        <begin position="239"/>
        <end position="274"/>
    </location>
</feature>
<feature type="active site" description="Proton donor" evidence="1">
    <location>
        <position position="106"/>
    </location>
</feature>
<feature type="binding site" evidence="1">
    <location>
        <position position="92"/>
    </location>
    <ligand>
        <name>substrate</name>
    </ligand>
</feature>
<feature type="binding site" evidence="1">
    <location>
        <position position="96"/>
    </location>
    <ligand>
        <name>a divalent metal cation</name>
        <dbReference type="ChEBI" id="CHEBI:60240"/>
    </ligand>
</feature>
<feature type="binding site" evidence="1">
    <location>
        <position position="106"/>
    </location>
    <ligand>
        <name>a divalent metal cation</name>
        <dbReference type="ChEBI" id="CHEBI:60240"/>
    </ligand>
</feature>
<feature type="binding site" evidence="1">
    <location>
        <begin position="108"/>
        <end position="110"/>
    </location>
    <ligand>
        <name>substrate</name>
    </ligand>
</feature>
<feature type="binding site" evidence="1">
    <location>
        <position position="145"/>
    </location>
    <ligand>
        <name>a divalent metal cation</name>
        <dbReference type="ChEBI" id="CHEBI:60240"/>
    </ligand>
</feature>
<feature type="binding site" evidence="1">
    <location>
        <position position="175"/>
    </location>
    <ligand>
        <name>a divalent metal cation</name>
        <dbReference type="ChEBI" id="CHEBI:60240"/>
    </ligand>
</feature>
<feature type="binding site" evidence="1">
    <location>
        <begin position="257"/>
        <end position="259"/>
    </location>
    <ligand>
        <name>substrate</name>
    </ligand>
</feature>
<feature type="site" description="Important for dimerization" evidence="1">
    <location>
        <position position="175"/>
    </location>
</feature>
<dbReference type="EC" id="1.3.3.3" evidence="1"/>
<dbReference type="EMBL" id="AP008229">
    <property type="protein sequence ID" value="BAE70757.1"/>
    <property type="molecule type" value="Genomic_DNA"/>
</dbReference>
<dbReference type="RefSeq" id="WP_011260560.1">
    <property type="nucleotide sequence ID" value="NC_007705.1"/>
</dbReference>
<dbReference type="SMR" id="Q2NY70"/>
<dbReference type="KEGG" id="xom:XOO4002"/>
<dbReference type="HOGENOM" id="CLU_026169_0_1_6"/>
<dbReference type="UniPathway" id="UPA00251">
    <property type="reaction ID" value="UER00322"/>
</dbReference>
<dbReference type="GO" id="GO:0005737">
    <property type="term" value="C:cytoplasm"/>
    <property type="evidence" value="ECO:0007669"/>
    <property type="project" value="UniProtKB-SubCell"/>
</dbReference>
<dbReference type="GO" id="GO:0004109">
    <property type="term" value="F:coproporphyrinogen oxidase activity"/>
    <property type="evidence" value="ECO:0007669"/>
    <property type="project" value="UniProtKB-UniRule"/>
</dbReference>
<dbReference type="GO" id="GO:0046872">
    <property type="term" value="F:metal ion binding"/>
    <property type="evidence" value="ECO:0007669"/>
    <property type="project" value="UniProtKB-KW"/>
</dbReference>
<dbReference type="GO" id="GO:0042803">
    <property type="term" value="F:protein homodimerization activity"/>
    <property type="evidence" value="ECO:0000250"/>
    <property type="project" value="UniProtKB"/>
</dbReference>
<dbReference type="GO" id="GO:0006782">
    <property type="term" value="P:protoporphyrinogen IX biosynthetic process"/>
    <property type="evidence" value="ECO:0007669"/>
    <property type="project" value="UniProtKB-UniRule"/>
</dbReference>
<dbReference type="FunFam" id="3.40.1500.10:FF:000001">
    <property type="entry name" value="Oxygen-dependent coproporphyrinogen-III oxidase"/>
    <property type="match status" value="1"/>
</dbReference>
<dbReference type="Gene3D" id="3.40.1500.10">
    <property type="entry name" value="Coproporphyrinogen III oxidase, aerobic"/>
    <property type="match status" value="1"/>
</dbReference>
<dbReference type="HAMAP" id="MF_00333">
    <property type="entry name" value="Coprogen_oxidas"/>
    <property type="match status" value="1"/>
</dbReference>
<dbReference type="InterPro" id="IPR001260">
    <property type="entry name" value="Coprogen_oxidase_aer"/>
</dbReference>
<dbReference type="InterPro" id="IPR036406">
    <property type="entry name" value="Coprogen_oxidase_aer_sf"/>
</dbReference>
<dbReference type="InterPro" id="IPR018375">
    <property type="entry name" value="Coprogen_oxidase_CS"/>
</dbReference>
<dbReference type="NCBIfam" id="NF003727">
    <property type="entry name" value="PRK05330.1"/>
    <property type="match status" value="1"/>
</dbReference>
<dbReference type="PANTHER" id="PTHR10755">
    <property type="entry name" value="COPROPORPHYRINOGEN III OXIDASE, MITOCHONDRIAL"/>
    <property type="match status" value="1"/>
</dbReference>
<dbReference type="PANTHER" id="PTHR10755:SF0">
    <property type="entry name" value="OXYGEN-DEPENDENT COPROPORPHYRINOGEN-III OXIDASE, MITOCHONDRIAL"/>
    <property type="match status" value="1"/>
</dbReference>
<dbReference type="Pfam" id="PF01218">
    <property type="entry name" value="Coprogen_oxidas"/>
    <property type="match status" value="1"/>
</dbReference>
<dbReference type="PIRSF" id="PIRSF000166">
    <property type="entry name" value="Coproporphyri_ox"/>
    <property type="match status" value="1"/>
</dbReference>
<dbReference type="PRINTS" id="PR00073">
    <property type="entry name" value="COPRGNOXDASE"/>
</dbReference>
<dbReference type="SUPFAM" id="SSF102886">
    <property type="entry name" value="Coproporphyrinogen III oxidase"/>
    <property type="match status" value="1"/>
</dbReference>
<dbReference type="PROSITE" id="PS01021">
    <property type="entry name" value="COPROGEN_OXIDASE"/>
    <property type="match status" value="1"/>
</dbReference>
<name>HEM6_XANOM</name>
<protein>
    <recommendedName>
        <fullName evidence="1">Oxygen-dependent coproporphyrinogen-III oxidase</fullName>
        <shortName evidence="1">CPO</shortName>
        <shortName evidence="1">Coprogen oxidase</shortName>
        <shortName evidence="1">Coproporphyrinogenase</shortName>
        <ecNumber evidence="1">1.3.3.3</ecNumber>
    </recommendedName>
</protein>
<evidence type="ECO:0000255" key="1">
    <source>
        <dbReference type="HAMAP-Rule" id="MF_00333"/>
    </source>
</evidence>
<reference key="1">
    <citation type="journal article" date="2005" name="Jpn. Agric. Res. Q.">
        <title>Genome sequence of Xanthomonas oryzae pv. oryzae suggests contribution of large numbers of effector genes and insertion sequences to its race diversity.</title>
        <authorList>
            <person name="Ochiai H."/>
            <person name="Inoue Y."/>
            <person name="Takeya M."/>
            <person name="Sasaki A."/>
            <person name="Kaku H."/>
        </authorList>
    </citation>
    <scope>NUCLEOTIDE SEQUENCE [LARGE SCALE GENOMIC DNA]</scope>
    <source>
        <strain>MAFF 311018</strain>
    </source>
</reference>
<keyword id="KW-0963">Cytoplasm</keyword>
<keyword id="KW-0350">Heme biosynthesis</keyword>
<keyword id="KW-0479">Metal-binding</keyword>
<keyword id="KW-0560">Oxidoreductase</keyword>
<keyword id="KW-0627">Porphyrin biosynthesis</keyword>
<sequence length="299" mass="34371">MNEFDRVRDYLTDLQDRICAAVEAADGKARFAEDLWKREEGGGGRTRILRDGAVFEQAGIGFSDVSGTRLPPSASAHRPELAGATWRACGVSLVFHPHNPYIPTTHMNVRYFRAERDGEVVAAWFGGGFDLTPFYPFDEDVQHWHRVAQALCEPFGEERYAAHKRWCDEYFFLRHRNETRGVGGLFFDDLGKEFEHDFAYQQAVGNGFLDAYMPIVQRRKDTAYGEREREFQLYRRGRYVEFNLVYDRGTLFGLQSGGRAESILMSLPPRVRWEYGFTPEPGSAEARLADYLIPRDWLG</sequence>
<proteinExistence type="inferred from homology"/>